<reference key="1">
    <citation type="journal article" date="1997" name="DNA Res.">
        <title>Structural analysis of Arabidopsis thaliana chromosome 5. III. Sequence features of the regions of 1,191,918 bp covered by seventeen physically assigned P1 clones.</title>
        <authorList>
            <person name="Nakamura Y."/>
            <person name="Sato S."/>
            <person name="Kaneko T."/>
            <person name="Kotani H."/>
            <person name="Asamizu E."/>
            <person name="Miyajima N."/>
            <person name="Tabata S."/>
        </authorList>
    </citation>
    <scope>NUCLEOTIDE SEQUENCE [LARGE SCALE GENOMIC DNA]</scope>
    <source>
        <strain>cv. Columbia</strain>
    </source>
</reference>
<reference key="2">
    <citation type="journal article" date="2017" name="Plant J.">
        <title>Araport11: a complete reannotation of the Arabidopsis thaliana reference genome.</title>
        <authorList>
            <person name="Cheng C.Y."/>
            <person name="Krishnakumar V."/>
            <person name="Chan A.P."/>
            <person name="Thibaud-Nissen F."/>
            <person name="Schobel S."/>
            <person name="Town C.D."/>
        </authorList>
    </citation>
    <scope>GENOME REANNOTATION</scope>
    <source>
        <strain>cv. Columbia</strain>
    </source>
</reference>
<reference key="3">
    <citation type="journal article" date="2003" name="Science">
        <title>Empirical analysis of transcriptional activity in the Arabidopsis genome.</title>
        <authorList>
            <person name="Yamada K."/>
            <person name="Lim J."/>
            <person name="Dale J.M."/>
            <person name="Chen H."/>
            <person name="Shinn P."/>
            <person name="Palm C.J."/>
            <person name="Southwick A.M."/>
            <person name="Wu H.C."/>
            <person name="Kim C.J."/>
            <person name="Nguyen M."/>
            <person name="Pham P.K."/>
            <person name="Cheuk R.F."/>
            <person name="Karlin-Newmann G."/>
            <person name="Liu S.X."/>
            <person name="Lam B."/>
            <person name="Sakano H."/>
            <person name="Wu T."/>
            <person name="Yu G."/>
            <person name="Miranda M."/>
            <person name="Quach H.L."/>
            <person name="Tripp M."/>
            <person name="Chang C.H."/>
            <person name="Lee J.M."/>
            <person name="Toriumi M.J."/>
            <person name="Chan M.M."/>
            <person name="Tang C.C."/>
            <person name="Onodera C.S."/>
            <person name="Deng J.M."/>
            <person name="Akiyama K."/>
            <person name="Ansari Y."/>
            <person name="Arakawa T."/>
            <person name="Banh J."/>
            <person name="Banno F."/>
            <person name="Bowser L."/>
            <person name="Brooks S.Y."/>
            <person name="Carninci P."/>
            <person name="Chao Q."/>
            <person name="Choy N."/>
            <person name="Enju A."/>
            <person name="Goldsmith A.D."/>
            <person name="Gurjal M."/>
            <person name="Hansen N.F."/>
            <person name="Hayashizaki Y."/>
            <person name="Johnson-Hopson C."/>
            <person name="Hsuan V.W."/>
            <person name="Iida K."/>
            <person name="Karnes M."/>
            <person name="Khan S."/>
            <person name="Koesema E."/>
            <person name="Ishida J."/>
            <person name="Jiang P.X."/>
            <person name="Jones T."/>
            <person name="Kawai J."/>
            <person name="Kamiya A."/>
            <person name="Meyers C."/>
            <person name="Nakajima M."/>
            <person name="Narusaka M."/>
            <person name="Seki M."/>
            <person name="Sakurai T."/>
            <person name="Satou M."/>
            <person name="Tamse R."/>
            <person name="Vaysberg M."/>
            <person name="Wallender E.K."/>
            <person name="Wong C."/>
            <person name="Yamamura Y."/>
            <person name="Yuan S."/>
            <person name="Shinozaki K."/>
            <person name="Davis R.W."/>
            <person name="Theologis A."/>
            <person name="Ecker J.R."/>
        </authorList>
    </citation>
    <scope>NUCLEOTIDE SEQUENCE [LARGE SCALE MRNA]</scope>
    <source>
        <strain>cv. Columbia</strain>
    </source>
</reference>
<reference key="4">
    <citation type="submission" date="2005-03" db="EMBL/GenBank/DDBJ databases">
        <title>Large-scale analysis of RIKEN Arabidopsis full-length (RAFL) cDNAs.</title>
        <authorList>
            <person name="Totoki Y."/>
            <person name="Seki M."/>
            <person name="Ishida J."/>
            <person name="Nakajima M."/>
            <person name="Enju A."/>
            <person name="Kamiya A."/>
            <person name="Narusaka M."/>
            <person name="Shin-i T."/>
            <person name="Nakagawa M."/>
            <person name="Sakamoto N."/>
            <person name="Oishi K."/>
            <person name="Kohara Y."/>
            <person name="Kobayashi M."/>
            <person name="Toyoda A."/>
            <person name="Sakaki Y."/>
            <person name="Sakurai T."/>
            <person name="Iida K."/>
            <person name="Akiyama K."/>
            <person name="Satou M."/>
            <person name="Toyoda T."/>
            <person name="Konagaya A."/>
            <person name="Carninci P."/>
            <person name="Kawai J."/>
            <person name="Hayashizaki Y."/>
            <person name="Shinozaki K."/>
        </authorList>
    </citation>
    <scope>NUCLEOTIDE SEQUENCE [LARGE SCALE MRNA] OF 1-154</scope>
    <source>
        <strain>cv. Columbia</strain>
    </source>
</reference>
<reference key="5">
    <citation type="journal article" date="2008" name="Proc. Natl. Acad. Sci. U.S.A.">
        <title>Involvement of Arabidopsis HOS15 in histone deacetylation and cold tolerance.</title>
        <authorList>
            <person name="Zhu J."/>
            <person name="Jeong J.C."/>
            <person name="Zhu Y."/>
            <person name="Sokolchik I."/>
            <person name="Miyazaki S."/>
            <person name="Zhu J.K."/>
            <person name="Hasegawa P.M."/>
            <person name="Bohnert H.J."/>
            <person name="Shi H."/>
            <person name="Yun D.J."/>
            <person name="Bressan R.A."/>
        </authorList>
    </citation>
    <scope>FUNCTION</scope>
    <scope>SUBCELLULAR LOCATION</scope>
    <scope>DISRUPTION PHENOTYPE</scope>
</reference>
<sequence>MSSLTSVELNFLVFRYLQESGFTHAAFTLGYEAGINKSNIDGNMVPPGALIKFVQKGLQYMEMEANLSNSEVDIDEDFSFFQPLDLISKDVKELQDMLREKKRKERDMEKERDRSKENDKGVEREHEGDRNRAKEKDRHEKQKEREREREKLEREKEREREKIEREKEREREKMEREIFEREKDRLKLEKEREIEREREREKIEREKSHEKQLGDADREMVIDQTDKEIAGDGSTGAEPMDIVMTPTSQTSHIPNSDVRILEGHTSEVCACAWSPSASLLASGSGDATARIWSIPEGSFKAVHTGRNINALILKHAKGKSNEKSKDVTTLDWNGEGTLLATGSCDGQARIWTLNGELISTLSKHKGPIFSLKWNKKGDYLLTGSVDRTAVVWDVKAEEWKQQFEFHSGPTLDVDWRNNVSFATSSTDSMIYLCKIGETRPAKTFTGHQGEVNCVKWDPTGSLLASCSDDSTAKIWNIKQSTFVHDLREHTKEIYTIRWSPTGPGTNNPNKQLTLASASFDSTVKLWDAELGKMLCSFNGHREPVYSLAFSPNGEYIASGSLDKSIHIWSIKEGKIVKTYTGNGGIFEVCWNKEGNKIAACFADNSVCVLDFRM</sequence>
<keyword id="KW-0539">Nucleus</keyword>
<keyword id="KW-1185">Reference proteome</keyword>
<keyword id="KW-0677">Repeat</keyword>
<keyword id="KW-0678">Repressor</keyword>
<keyword id="KW-0346">Stress response</keyword>
<keyword id="KW-0804">Transcription</keyword>
<keyword id="KW-0805">Transcription regulation</keyword>
<keyword id="KW-0853">WD repeat</keyword>
<protein>
    <recommendedName>
        <fullName evidence="6">WD40 repeat-containing protein HOS15</fullName>
    </recommendedName>
    <alternativeName>
        <fullName evidence="5">HIGH OSMOTIC STRESS GENE EXPRESSION 15</fullName>
    </alternativeName>
</protein>
<name>HOS15_ARATH</name>
<evidence type="ECO:0000255" key="1"/>
<evidence type="ECO:0000255" key="2">
    <source>
        <dbReference type="PROSITE-ProRule" id="PRU00126"/>
    </source>
</evidence>
<evidence type="ECO:0000256" key="3">
    <source>
        <dbReference type="SAM" id="MobiDB-lite"/>
    </source>
</evidence>
<evidence type="ECO:0000269" key="4">
    <source>
    </source>
</evidence>
<evidence type="ECO:0000303" key="5">
    <source>
    </source>
</evidence>
<evidence type="ECO:0000305" key="6"/>
<evidence type="ECO:0000312" key="7">
    <source>
        <dbReference type="Araport" id="AT5G67320"/>
    </source>
</evidence>
<evidence type="ECO:0000312" key="8">
    <source>
        <dbReference type="EMBL" id="BAB09017.1"/>
    </source>
</evidence>
<feature type="chain" id="PRO_0000438736" description="WD40 repeat-containing protein HOS15">
    <location>
        <begin position="1"/>
        <end position="613"/>
    </location>
</feature>
<feature type="domain" description="LisH" evidence="2">
    <location>
        <begin position="5"/>
        <end position="37"/>
    </location>
</feature>
<feature type="repeat" description="WD 1" evidence="1">
    <location>
        <begin position="263"/>
        <end position="302"/>
    </location>
</feature>
<feature type="repeat" description="WD 2" evidence="1">
    <location>
        <begin position="322"/>
        <end position="362"/>
    </location>
</feature>
<feature type="repeat" description="WD 3" evidence="1">
    <location>
        <begin position="363"/>
        <end position="402"/>
    </location>
</feature>
<feature type="repeat" description="WD 4" evidence="1">
    <location>
        <begin position="405"/>
        <end position="443"/>
    </location>
</feature>
<feature type="repeat" description="WD 5" evidence="1">
    <location>
        <begin position="446"/>
        <end position="485"/>
    </location>
</feature>
<feature type="repeat" description="WD 6" evidence="1">
    <location>
        <begin position="488"/>
        <end position="536"/>
    </location>
</feature>
<feature type="repeat" description="WD 7" evidence="1">
    <location>
        <begin position="539"/>
        <end position="580"/>
    </location>
</feature>
<feature type="repeat" description="WD 8" evidence="1">
    <location>
        <begin position="582"/>
        <end position="613"/>
    </location>
</feature>
<feature type="region of interest" description="Disordered" evidence="3">
    <location>
        <begin position="101"/>
        <end position="174"/>
    </location>
</feature>
<feature type="region of interest" description="Disordered" evidence="3">
    <location>
        <begin position="193"/>
        <end position="214"/>
    </location>
</feature>
<dbReference type="EMBL" id="AB007645">
    <property type="protein sequence ID" value="BAB09017.1"/>
    <property type="molecule type" value="Genomic_DNA"/>
</dbReference>
<dbReference type="EMBL" id="CP002688">
    <property type="protein sequence ID" value="AED98328.1"/>
    <property type="molecule type" value="Genomic_DNA"/>
</dbReference>
<dbReference type="EMBL" id="AY057698">
    <property type="protein sequence ID" value="AAL15328.1"/>
    <property type="molecule type" value="mRNA"/>
</dbReference>
<dbReference type="EMBL" id="AY143932">
    <property type="protein sequence ID" value="AAN28871.1"/>
    <property type="molecule type" value="mRNA"/>
</dbReference>
<dbReference type="EMBL" id="AK221483">
    <property type="protein sequence ID" value="BAD94649.1"/>
    <property type="molecule type" value="mRNA"/>
</dbReference>
<dbReference type="RefSeq" id="NP_201533.1">
    <property type="nucleotide sequence ID" value="NM_126132.4"/>
</dbReference>
<dbReference type="SMR" id="Q9FN19"/>
<dbReference type="FunCoup" id="Q9FN19">
    <property type="interactions" value="3132"/>
</dbReference>
<dbReference type="STRING" id="3702.Q9FN19"/>
<dbReference type="PaxDb" id="3702-AT5G67320.1"/>
<dbReference type="ProteomicsDB" id="230264"/>
<dbReference type="EnsemblPlants" id="AT5G67320.1">
    <property type="protein sequence ID" value="AT5G67320.1"/>
    <property type="gene ID" value="AT5G67320"/>
</dbReference>
<dbReference type="GeneID" id="836867"/>
<dbReference type="Gramene" id="AT5G67320.1">
    <property type="protein sequence ID" value="AT5G67320.1"/>
    <property type="gene ID" value="AT5G67320"/>
</dbReference>
<dbReference type="KEGG" id="ath:AT5G67320"/>
<dbReference type="Araport" id="AT5G67320"/>
<dbReference type="TAIR" id="AT5G67320">
    <property type="gene designation" value="HOS15"/>
</dbReference>
<dbReference type="eggNOG" id="KOG0273">
    <property type="taxonomic scope" value="Eukaryota"/>
</dbReference>
<dbReference type="HOGENOM" id="CLU_007609_2_0_1"/>
<dbReference type="InParanoid" id="Q9FN19"/>
<dbReference type="OMA" id="KWNKCGN"/>
<dbReference type="OrthoDB" id="1367865at2759"/>
<dbReference type="PhylomeDB" id="Q9FN19"/>
<dbReference type="PRO" id="PR:Q9FN19"/>
<dbReference type="Proteomes" id="UP000006548">
    <property type="component" value="Chromosome 5"/>
</dbReference>
<dbReference type="ExpressionAtlas" id="Q9FN19">
    <property type="expression patterns" value="baseline and differential"/>
</dbReference>
<dbReference type="GO" id="GO:0080008">
    <property type="term" value="C:Cul4-RING E3 ubiquitin ligase complex"/>
    <property type="evidence" value="ECO:0000250"/>
    <property type="project" value="TAIR"/>
</dbReference>
<dbReference type="GO" id="GO:0005634">
    <property type="term" value="C:nucleus"/>
    <property type="evidence" value="ECO:0000314"/>
    <property type="project" value="TAIR"/>
</dbReference>
<dbReference type="GO" id="GO:0003690">
    <property type="term" value="F:double-stranded DNA binding"/>
    <property type="evidence" value="ECO:0000314"/>
    <property type="project" value="TAIR"/>
</dbReference>
<dbReference type="GO" id="GO:0003714">
    <property type="term" value="F:transcription corepressor activity"/>
    <property type="evidence" value="ECO:0007669"/>
    <property type="project" value="InterPro"/>
</dbReference>
<dbReference type="GO" id="GO:0009409">
    <property type="term" value="P:response to cold"/>
    <property type="evidence" value="ECO:0000315"/>
    <property type="project" value="TAIR"/>
</dbReference>
<dbReference type="CDD" id="cd00200">
    <property type="entry name" value="WD40"/>
    <property type="match status" value="1"/>
</dbReference>
<dbReference type="FunFam" id="1.20.960.30:FF:000001">
    <property type="entry name" value="F-box-like/WD repeat-containing protein TBL1XR1"/>
    <property type="match status" value="1"/>
</dbReference>
<dbReference type="FunFam" id="2.130.10.10:FF:000218">
    <property type="entry name" value="WD40 repeat-containing protein HOS15"/>
    <property type="match status" value="1"/>
</dbReference>
<dbReference type="Gene3D" id="1.20.960.30">
    <property type="match status" value="1"/>
</dbReference>
<dbReference type="Gene3D" id="2.130.10.10">
    <property type="entry name" value="YVTN repeat-like/Quinoprotein amine dehydrogenase"/>
    <property type="match status" value="1"/>
</dbReference>
<dbReference type="InterPro" id="IPR045183">
    <property type="entry name" value="Ebi-like"/>
</dbReference>
<dbReference type="InterPro" id="IPR020472">
    <property type="entry name" value="G-protein_beta_WD-40_rep"/>
</dbReference>
<dbReference type="InterPro" id="IPR006594">
    <property type="entry name" value="LisH"/>
</dbReference>
<dbReference type="InterPro" id="IPR015943">
    <property type="entry name" value="WD40/YVTN_repeat-like_dom_sf"/>
</dbReference>
<dbReference type="InterPro" id="IPR019775">
    <property type="entry name" value="WD40_repeat_CS"/>
</dbReference>
<dbReference type="InterPro" id="IPR036322">
    <property type="entry name" value="WD40_repeat_dom_sf"/>
</dbReference>
<dbReference type="InterPro" id="IPR001680">
    <property type="entry name" value="WD40_rpt"/>
</dbReference>
<dbReference type="PANTHER" id="PTHR22846:SF2">
    <property type="entry name" value="F-BOX-LIKE_WD REPEAT-CONTAINING PROTEIN EBI"/>
    <property type="match status" value="1"/>
</dbReference>
<dbReference type="PANTHER" id="PTHR22846">
    <property type="entry name" value="WD40 REPEAT PROTEIN"/>
    <property type="match status" value="1"/>
</dbReference>
<dbReference type="Pfam" id="PF08513">
    <property type="entry name" value="LisH"/>
    <property type="match status" value="1"/>
</dbReference>
<dbReference type="Pfam" id="PF00400">
    <property type="entry name" value="WD40"/>
    <property type="match status" value="7"/>
</dbReference>
<dbReference type="PRINTS" id="PR00320">
    <property type="entry name" value="GPROTEINBRPT"/>
</dbReference>
<dbReference type="SMART" id="SM00667">
    <property type="entry name" value="LisH"/>
    <property type="match status" value="1"/>
</dbReference>
<dbReference type="SMART" id="SM00320">
    <property type="entry name" value="WD40"/>
    <property type="match status" value="8"/>
</dbReference>
<dbReference type="SUPFAM" id="SSF50978">
    <property type="entry name" value="WD40 repeat-like"/>
    <property type="match status" value="1"/>
</dbReference>
<dbReference type="PROSITE" id="PS50896">
    <property type="entry name" value="LISH"/>
    <property type="match status" value="1"/>
</dbReference>
<dbReference type="PROSITE" id="PS00678">
    <property type="entry name" value="WD_REPEATS_1"/>
    <property type="match status" value="3"/>
</dbReference>
<dbReference type="PROSITE" id="PS50082">
    <property type="entry name" value="WD_REPEATS_2"/>
    <property type="match status" value="6"/>
</dbReference>
<dbReference type="PROSITE" id="PS50294">
    <property type="entry name" value="WD_REPEATS_REGION"/>
    <property type="match status" value="1"/>
</dbReference>
<gene>
    <name evidence="5" type="primary">HOS15</name>
    <name evidence="7" type="ordered locus">At5g67320</name>
    <name evidence="8" type="ORF">K8K14.4</name>
</gene>
<comment type="function">
    <text evidence="4">Acts as a repressor of cold stress-regulated gene expression. Interacts specifically with and promotes deacetylation of histone H4. Plays a role in gene regulation for plant acclimation and tolerance to cold stress.</text>
</comment>
<comment type="subcellular location">
    <subcellularLocation>
        <location evidence="4">Nucleus</location>
    </subcellularLocation>
</comment>
<comment type="disruption phenotype">
    <text evidence="4">No visible phenotype under normal growth conditions, but mutant seedlings are hypersensitive to freezing.</text>
</comment>
<accession>Q9FN19</accession>
<accession>Q56Y40</accession>
<proteinExistence type="evidence at transcript level"/>
<organism>
    <name type="scientific">Arabidopsis thaliana</name>
    <name type="common">Mouse-ear cress</name>
    <dbReference type="NCBI Taxonomy" id="3702"/>
    <lineage>
        <taxon>Eukaryota</taxon>
        <taxon>Viridiplantae</taxon>
        <taxon>Streptophyta</taxon>
        <taxon>Embryophyta</taxon>
        <taxon>Tracheophyta</taxon>
        <taxon>Spermatophyta</taxon>
        <taxon>Magnoliopsida</taxon>
        <taxon>eudicotyledons</taxon>
        <taxon>Gunneridae</taxon>
        <taxon>Pentapetalae</taxon>
        <taxon>rosids</taxon>
        <taxon>malvids</taxon>
        <taxon>Brassicales</taxon>
        <taxon>Brassicaceae</taxon>
        <taxon>Camelineae</taxon>
        <taxon>Arabidopsis</taxon>
    </lineage>
</organism>